<accession>P0CL31</accession>
<accession>Q8TFA6</accession>
<dbReference type="EMBL" id="Z73521">
    <property type="status" value="NOT_ANNOTATED_CDS"/>
    <property type="molecule type" value="Genomic_DNA"/>
</dbReference>
<dbReference type="EMBL" id="Z73638">
    <property type="status" value="NOT_ANNOTATED_CDS"/>
    <property type="molecule type" value="Genomic_DNA"/>
</dbReference>
<dbReference type="EMBL" id="AF479982">
    <property type="protein sequence ID" value="AAL79295.1"/>
    <property type="molecule type" value="Genomic_DNA"/>
</dbReference>
<dbReference type="EnsemblFungi" id="YER190C-A_mRNA">
    <property type="protein sequence ID" value="YER190C-A"/>
    <property type="gene ID" value="YER190C-A"/>
</dbReference>
<dbReference type="EnsemblFungi" id="YGR296C-A_mRNA">
    <property type="protein sequence ID" value="YGR296C-A"/>
    <property type="gene ID" value="YGR296C-A"/>
</dbReference>
<dbReference type="EnsemblFungi" id="YML133W-A_mRNA">
    <property type="protein sequence ID" value="YML133W-A"/>
    <property type="gene ID" value="YML133W-A"/>
</dbReference>
<dbReference type="EnsemblFungi" id="YNL339W-A_mRNA">
    <property type="protein sequence ID" value="YNL339W-A"/>
    <property type="gene ID" value="YNL339W-A"/>
</dbReference>
<dbReference type="EnsemblFungi" id="YPL283W-A_mRNA">
    <property type="protein sequence ID" value="YPL283W-A"/>
    <property type="gene ID" value="YPL283W-A"/>
</dbReference>
<dbReference type="AGR" id="SGD:S000028723"/>
<dbReference type="SGD" id="S000028723">
    <property type="gene designation" value="YPL283W-A"/>
</dbReference>
<dbReference type="GeneTree" id="ENSGT00940000178355"/>
<dbReference type="HOGENOM" id="CLU_106419_0_0_1"/>
<dbReference type="OMA" id="CAHGATM"/>
<dbReference type="GO" id="GO:0016020">
    <property type="term" value="C:membrane"/>
    <property type="evidence" value="ECO:0007669"/>
    <property type="project" value="UniProtKB-SubCell"/>
</dbReference>
<name>YPL83_YEAST</name>
<evidence type="ECO:0000255" key="1"/>
<evidence type="ECO:0000256" key="2">
    <source>
        <dbReference type="SAM" id="MobiDB-lite"/>
    </source>
</evidence>
<evidence type="ECO:0000305" key="3"/>
<evidence type="ECO:0000305" key="4">
    <source>
    </source>
</evidence>
<keyword id="KW-0472">Membrane</keyword>
<keyword id="KW-0732">Signal</keyword>
<keyword id="KW-0812">Transmembrane</keyword>
<keyword id="KW-1133">Transmembrane helix</keyword>
<feature type="signal peptide" evidence="1">
    <location>
        <begin position="1"/>
        <end position="17"/>
    </location>
</feature>
<feature type="chain" id="PRO_0000406008" description="Putative uncharacterized protein YPL283W-A">
    <location>
        <begin position="18"/>
        <end position="191"/>
    </location>
</feature>
<feature type="transmembrane region" description="Helical" evidence="1">
    <location>
        <begin position="168"/>
        <end position="188"/>
    </location>
</feature>
<feature type="region of interest" description="Disordered" evidence="2">
    <location>
        <begin position="82"/>
        <end position="148"/>
    </location>
</feature>
<comment type="subcellular location">
    <subcellularLocation>
        <location evidence="3">Membrane</location>
        <topology evidence="3">Single-pass membrane protein</topology>
    </subcellularLocation>
</comment>
<comment type="miscellaneous">
    <text evidence="3">Completely overlaps YRF1-7.</text>
</comment>
<comment type="caution">
    <text evidence="4">Product of a dubious gene prediction unlikely to encode a functional protein. Because of that it is not part of the S.cerevisiae S288c complete/reference proteome set.</text>
</comment>
<gene>
    <name type="ordered locus">YPL283W-A</name>
</gene>
<protein>
    <recommendedName>
        <fullName>Putative uncharacterized protein YPL283W-A</fullName>
    </recommendedName>
</protein>
<reference key="1">
    <citation type="journal article" date="1997" name="Nature">
        <title>The nucleotide sequence of Saccharomyces cerevisiae chromosome XVI.</title>
        <authorList>
            <person name="Bussey H."/>
            <person name="Storms R.K."/>
            <person name="Ahmed A."/>
            <person name="Albermann K."/>
            <person name="Allen E."/>
            <person name="Ansorge W."/>
            <person name="Araujo R."/>
            <person name="Aparicio A."/>
            <person name="Barrell B.G."/>
            <person name="Badcock K."/>
            <person name="Benes V."/>
            <person name="Botstein D."/>
            <person name="Bowman S."/>
            <person name="Brueckner M."/>
            <person name="Carpenter J."/>
            <person name="Cherry J.M."/>
            <person name="Chung E."/>
            <person name="Churcher C.M."/>
            <person name="Coster F."/>
            <person name="Davis K."/>
            <person name="Davis R.W."/>
            <person name="Dietrich F.S."/>
            <person name="Delius H."/>
            <person name="DiPaolo T."/>
            <person name="Dubois E."/>
            <person name="Duesterhoeft A."/>
            <person name="Duncan M."/>
            <person name="Floeth M."/>
            <person name="Fortin N."/>
            <person name="Friesen J.D."/>
            <person name="Fritz C."/>
            <person name="Goffeau A."/>
            <person name="Hall J."/>
            <person name="Hebling U."/>
            <person name="Heumann K."/>
            <person name="Hilbert H."/>
            <person name="Hillier L.W."/>
            <person name="Hunicke-Smith S."/>
            <person name="Hyman R.W."/>
            <person name="Johnston M."/>
            <person name="Kalman S."/>
            <person name="Kleine K."/>
            <person name="Komp C."/>
            <person name="Kurdi O."/>
            <person name="Lashkari D."/>
            <person name="Lew H."/>
            <person name="Lin A."/>
            <person name="Lin D."/>
            <person name="Louis E.J."/>
            <person name="Marathe R."/>
            <person name="Messenguy F."/>
            <person name="Mewes H.-W."/>
            <person name="Mirtipati S."/>
            <person name="Moestl D."/>
            <person name="Mueller-Auer S."/>
            <person name="Namath A."/>
            <person name="Nentwich U."/>
            <person name="Oefner P."/>
            <person name="Pearson D."/>
            <person name="Petel F.X."/>
            <person name="Pohl T.M."/>
            <person name="Purnelle B."/>
            <person name="Rajandream M.A."/>
            <person name="Rechmann S."/>
            <person name="Rieger M."/>
            <person name="Riles L."/>
            <person name="Roberts D."/>
            <person name="Schaefer M."/>
            <person name="Scharfe M."/>
            <person name="Scherens B."/>
            <person name="Schramm S."/>
            <person name="Schroeder M."/>
            <person name="Sdicu A.-M."/>
            <person name="Tettelin H."/>
            <person name="Urrestarazu L.A."/>
            <person name="Ushinsky S."/>
            <person name="Vierendeels F."/>
            <person name="Vissers S."/>
            <person name="Voss H."/>
            <person name="Walsh S.V."/>
            <person name="Wambutt R."/>
            <person name="Wang Y."/>
            <person name="Wedler E."/>
            <person name="Wedler H."/>
            <person name="Winnett E."/>
            <person name="Zhong W.-W."/>
            <person name="Zollner A."/>
            <person name="Vo D.H."/>
            <person name="Hani J."/>
        </authorList>
    </citation>
    <scope>NUCLEOTIDE SEQUENCE [LARGE SCALE GENOMIC DNA]</scope>
    <source>
        <strain>ATCC 204508 / S288c</strain>
    </source>
</reference>
<reference key="2">
    <citation type="journal article" date="2014" name="G3 (Bethesda)">
        <title>The reference genome sequence of Saccharomyces cerevisiae: Then and now.</title>
        <authorList>
            <person name="Engel S.R."/>
            <person name="Dietrich F.S."/>
            <person name="Fisk D.G."/>
            <person name="Binkley G."/>
            <person name="Balakrishnan R."/>
            <person name="Costanzo M.C."/>
            <person name="Dwight S.S."/>
            <person name="Hitz B.C."/>
            <person name="Karra K."/>
            <person name="Nash R.S."/>
            <person name="Weng S."/>
            <person name="Wong E.D."/>
            <person name="Lloyd P."/>
            <person name="Skrzypek M.S."/>
            <person name="Miyasato S.R."/>
            <person name="Simison M."/>
            <person name="Cherry J.M."/>
        </authorList>
    </citation>
    <scope>GENOME REANNOTATION</scope>
    <source>
        <strain>ATCC 204508 / S288c</strain>
    </source>
</reference>
<reference key="3">
    <citation type="journal article" date="2002" name="Nat. Biotechnol.">
        <title>An integrated approach for finding overlooked genes in yeast.</title>
        <authorList>
            <person name="Kumar A."/>
            <person name="Harrison P.M."/>
            <person name="Cheung K.-H."/>
            <person name="Lan N."/>
            <person name="Echols N."/>
            <person name="Bertone P."/>
            <person name="Miller P."/>
            <person name="Gerstein M.B."/>
            <person name="Snyder M."/>
        </authorList>
    </citation>
    <scope>NUCLEOTIDE SEQUENCE [GENOMIC DNA]</scope>
</reference>
<sequence length="191" mass="17367">MESIILSIAIFIGVLLGTSVGTFSGSGISAGVGASSGSGISAGVGASSGSSTSVGVGTFGGSSTSVGVGTFGGSSTSVGVGTFSGSRTSPDVDAGSGSSTSPDVGAGSGSSISAGVGTFSGSRTSPDVDAGSGSSTSPDVGAGSGSSISAGVGSRIGTGISTTMNARVAVLITAAILSAPVTAIALLEARR</sequence>
<proteinExistence type="uncertain"/>
<organism>
    <name type="scientific">Saccharomyces cerevisiae (strain ATCC 204508 / S288c)</name>
    <name type="common">Baker's yeast</name>
    <dbReference type="NCBI Taxonomy" id="559292"/>
    <lineage>
        <taxon>Eukaryota</taxon>
        <taxon>Fungi</taxon>
        <taxon>Dikarya</taxon>
        <taxon>Ascomycota</taxon>
        <taxon>Saccharomycotina</taxon>
        <taxon>Saccharomycetes</taxon>
        <taxon>Saccharomycetales</taxon>
        <taxon>Saccharomycetaceae</taxon>
        <taxon>Saccharomyces</taxon>
    </lineage>
</organism>